<sequence>MSLIHPDTAKYPFKFEPFLRQEYSFSLDPDRPICEFYNSREGPKSCPRGPLCPKKHVLPIFQNKIVCRHWLRGLCKKNDQCEYLHEYNLRKMPECVFFSKNGYCTQSPDCQYLHIDPASKIPKCENYEMGFCPLGSSCPRRHIKKVFCQRYMTGFCPLGKDECDMEHPQFIIPDEGSKLRIKRDDEINTRKMDEEKERRLNAIINGEV</sequence>
<feature type="chain" id="PRO_0000213910" description="mRNA 3'-end-processing protein YTH1">
    <location>
        <begin position="1"/>
        <end position="208"/>
    </location>
</feature>
<feature type="zinc finger region" description="C3H1-type 1" evidence="1">
    <location>
        <begin position="28"/>
        <end position="59"/>
    </location>
</feature>
<feature type="zinc finger region" description="C3H1-type 2" evidence="1">
    <location>
        <begin position="61"/>
        <end position="88"/>
    </location>
</feature>
<feature type="zinc finger region" description="C3H1-type 3" evidence="1">
    <location>
        <begin position="89"/>
        <end position="117"/>
    </location>
</feature>
<feature type="zinc finger region" description="C3H1-type 4" evidence="1">
    <location>
        <begin position="118"/>
        <end position="145"/>
    </location>
</feature>
<feature type="zinc finger region" description="C3H1-type 5" evidence="1">
    <location>
        <begin position="147"/>
        <end position="170"/>
    </location>
</feature>
<feature type="mutagenesis site" description="Lethal." evidence="2">
    <original>C</original>
    <variation>S</variation>
    <location>
        <position position="67"/>
    </location>
</feature>
<feature type="mutagenesis site" description="Temperature- and formamide-sensitive; abolishes cleavage and polyadenylation activity." evidence="2">
    <original>W</original>
    <variation>A</variation>
    <location>
        <position position="70"/>
    </location>
</feature>
<feature type="mutagenesis site" description="Lethal." evidence="2">
    <original>C</original>
    <variation>S</variation>
    <location>
        <position position="75"/>
    </location>
</feature>
<feature type="mutagenesis site" description="Temperature- and formamide-sensitive; impaired polyadenylation activity." evidence="2">
    <original>D</original>
    <variation>A</variation>
    <location>
        <position position="79"/>
    </location>
</feature>
<feature type="mutagenesis site" description="Lethal." evidence="2">
    <original>C</original>
    <variation>S</variation>
    <location>
        <position position="81"/>
    </location>
</feature>
<feature type="mutagenesis site" description="Temperature- and formamide-sensitive; impaired polyadenylation activity." evidence="2">
    <original>H</original>
    <variation>N</variation>
    <location>
        <position position="142"/>
    </location>
</feature>
<feature type="strand" evidence="11">
    <location>
        <begin position="3"/>
        <end position="5"/>
    </location>
</feature>
<feature type="helix" evidence="11">
    <location>
        <begin position="16"/>
        <end position="21"/>
    </location>
</feature>
<feature type="turn" evidence="11">
    <location>
        <begin position="39"/>
        <end position="41"/>
    </location>
</feature>
<feature type="helix" evidence="11">
    <location>
        <begin position="43"/>
        <end position="45"/>
    </location>
</feature>
<feature type="helix" evidence="11">
    <location>
        <begin position="49"/>
        <end position="51"/>
    </location>
</feature>
<feature type="strand" evidence="11">
    <location>
        <begin position="53"/>
        <end position="55"/>
    </location>
</feature>
<feature type="helix" evidence="11">
    <location>
        <begin position="59"/>
        <end position="62"/>
    </location>
</feature>
<feature type="strand" evidence="11">
    <location>
        <begin position="64"/>
        <end position="66"/>
    </location>
</feature>
<feature type="helix" evidence="11">
    <location>
        <begin position="68"/>
        <end position="71"/>
    </location>
</feature>
<feature type="helix" evidence="11">
    <location>
        <begin position="78"/>
        <end position="80"/>
    </location>
</feature>
<feature type="strand" evidence="11">
    <location>
        <begin position="82"/>
        <end position="84"/>
    </location>
</feature>
<feature type="helix" evidence="10">
    <location>
        <begin position="89"/>
        <end position="91"/>
    </location>
</feature>
<accession>Q06102</accession>
<accession>D6W4A5</accession>
<proteinExistence type="evidence at protein level"/>
<name>YTH1_YEAST</name>
<protein>
    <recommendedName>
        <fullName>mRNA 3'-end-processing protein YTH1</fullName>
    </recommendedName>
    <alternativeName>
        <fullName>Yeast 30 kDa homolog 1</fullName>
    </alternativeName>
</protein>
<comment type="function">
    <text evidence="4">RNA-binding component of the cleavage and polyadenylation factor (CPF) complex, which plays a key role in polyadenylation-dependent pre-mRNA 3'-end formation and cooperates with cleavage factors including the CFIA complex and NAB4/CFIB.</text>
</comment>
<comment type="subunit">
    <text evidence="3 4 5 8">Component of the cleavage and polyadenylation factor (CPF) complex, which is composed of at least PTI1, SYC1, SSU72, GLC7, MPE1, REF2, PFS2, PTA1, YSH1/BRR5, SWD2, CFT2/YDH1, YTH1, CFT1/YHH1, FIP1 and PAP1. Interacts with FIP1 and YSH1.</text>
</comment>
<comment type="interaction">
    <interactant intactId="EBI-38049">
        <id>Q06102</id>
    </interactant>
    <interactant intactId="EBI-6940">
        <id>P45976</id>
        <label>FIP1</label>
    </interactant>
    <organismsDiffer>false</organismsDiffer>
    <experiments>6</experiments>
</comment>
<comment type="interaction">
    <interactant intactId="EBI-38049">
        <id>Q06102</id>
    </interactant>
    <interactant intactId="EBI-38345">
        <id>Q06224</id>
        <label>YSH1</label>
    </interactant>
    <organismsDiffer>false</organismsDiffer>
    <experiments>5</experiments>
</comment>
<comment type="subcellular location">
    <subcellularLocation>
        <location evidence="5 6">Nucleus</location>
    </subcellularLocation>
</comment>
<comment type="miscellaneous">
    <text evidence="7">Present with 3690 molecules/cell in log phase SD medium.</text>
</comment>
<comment type="similarity">
    <text evidence="9">Belongs to the CPSF4/YTH1 family.</text>
</comment>
<gene>
    <name type="primary">YTH1</name>
    <name type="ordered locus">YPR107C</name>
</gene>
<keyword id="KW-0002">3D-structure</keyword>
<keyword id="KW-0479">Metal-binding</keyword>
<keyword id="KW-0507">mRNA processing</keyword>
<keyword id="KW-0539">Nucleus</keyword>
<keyword id="KW-1185">Reference proteome</keyword>
<keyword id="KW-0677">Repeat</keyword>
<keyword id="KW-0694">RNA-binding</keyword>
<keyword id="KW-0862">Zinc</keyword>
<keyword id="KW-0863">Zinc-finger</keyword>
<organism>
    <name type="scientific">Saccharomyces cerevisiae (strain ATCC 204508 / S288c)</name>
    <name type="common">Baker's yeast</name>
    <dbReference type="NCBI Taxonomy" id="559292"/>
    <lineage>
        <taxon>Eukaryota</taxon>
        <taxon>Fungi</taxon>
        <taxon>Dikarya</taxon>
        <taxon>Ascomycota</taxon>
        <taxon>Saccharomycotina</taxon>
        <taxon>Saccharomycetes</taxon>
        <taxon>Saccharomycetales</taxon>
        <taxon>Saccharomycetaceae</taxon>
        <taxon>Saccharomyces</taxon>
    </lineage>
</organism>
<evidence type="ECO:0000255" key="1">
    <source>
        <dbReference type="PROSITE-ProRule" id="PRU00723"/>
    </source>
</evidence>
<evidence type="ECO:0000269" key="2">
    <source>
    </source>
</evidence>
<evidence type="ECO:0000269" key="3">
    <source>
    </source>
</evidence>
<evidence type="ECO:0000269" key="4">
    <source>
    </source>
</evidence>
<evidence type="ECO:0000269" key="5">
    <source>
    </source>
</evidence>
<evidence type="ECO:0000269" key="6">
    <source>
    </source>
</evidence>
<evidence type="ECO:0000269" key="7">
    <source>
    </source>
</evidence>
<evidence type="ECO:0000269" key="8">
    <source>
    </source>
</evidence>
<evidence type="ECO:0000305" key="9"/>
<evidence type="ECO:0007829" key="10">
    <source>
        <dbReference type="PDB" id="7ZGQ"/>
    </source>
</evidence>
<evidence type="ECO:0007829" key="11">
    <source>
        <dbReference type="PDB" id="7ZGR"/>
    </source>
</evidence>
<dbReference type="EMBL" id="U32445">
    <property type="protein sequence ID" value="AAB68077.1"/>
    <property type="molecule type" value="Genomic_DNA"/>
</dbReference>
<dbReference type="EMBL" id="AY558061">
    <property type="protein sequence ID" value="AAS56387.1"/>
    <property type="molecule type" value="Genomic_DNA"/>
</dbReference>
<dbReference type="EMBL" id="BK006949">
    <property type="protein sequence ID" value="DAA11521.1"/>
    <property type="molecule type" value="Genomic_DNA"/>
</dbReference>
<dbReference type="PIR" id="S59772">
    <property type="entry name" value="S59772"/>
</dbReference>
<dbReference type="RefSeq" id="NP_015432.1">
    <property type="nucleotide sequence ID" value="NM_001184204.1"/>
</dbReference>
<dbReference type="PDB" id="6EOJ">
    <property type="method" value="EM"/>
    <property type="resolution" value="3.55 A"/>
    <property type="chains" value="B=2-208"/>
</dbReference>
<dbReference type="PDB" id="7ZGP">
    <property type="method" value="EM"/>
    <property type="resolution" value="2.70 A"/>
    <property type="chains" value="B=1-208"/>
</dbReference>
<dbReference type="PDB" id="7ZGQ">
    <property type="method" value="EM"/>
    <property type="resolution" value="2.80 A"/>
    <property type="chains" value="B=1-208"/>
</dbReference>
<dbReference type="PDB" id="7ZGR">
    <property type="method" value="EM"/>
    <property type="resolution" value="2.60 A"/>
    <property type="chains" value="B=1-208"/>
</dbReference>
<dbReference type="PDBsum" id="6EOJ"/>
<dbReference type="PDBsum" id="7ZGP"/>
<dbReference type="PDBsum" id="7ZGQ"/>
<dbReference type="PDBsum" id="7ZGR"/>
<dbReference type="EMDB" id="EMD-3908"/>
<dbReference type="SMR" id="Q06102"/>
<dbReference type="BioGRID" id="36273">
    <property type="interactions" value="424"/>
</dbReference>
<dbReference type="ComplexPortal" id="CPX-1053">
    <property type="entry name" value="Cleavage and polyadenylation specificity factor complex"/>
</dbReference>
<dbReference type="DIP" id="DIP-2028N"/>
<dbReference type="FunCoup" id="Q06102">
    <property type="interactions" value="126"/>
</dbReference>
<dbReference type="IntAct" id="Q06102">
    <property type="interactions" value="19"/>
</dbReference>
<dbReference type="MINT" id="Q06102"/>
<dbReference type="STRING" id="4932.YPR107C"/>
<dbReference type="iPTMnet" id="Q06102"/>
<dbReference type="PaxDb" id="4932-YPR107C"/>
<dbReference type="PeptideAtlas" id="Q06102"/>
<dbReference type="EnsemblFungi" id="YPR107C_mRNA">
    <property type="protein sequence ID" value="YPR107C"/>
    <property type="gene ID" value="YPR107C"/>
</dbReference>
<dbReference type="GeneID" id="856222"/>
<dbReference type="KEGG" id="sce:YPR107C"/>
<dbReference type="AGR" id="SGD:S000006311"/>
<dbReference type="SGD" id="S000006311">
    <property type="gene designation" value="YTH1"/>
</dbReference>
<dbReference type="VEuPathDB" id="FungiDB:YPR107C"/>
<dbReference type="eggNOG" id="KOG1040">
    <property type="taxonomic scope" value="Eukaryota"/>
</dbReference>
<dbReference type="GeneTree" id="ENSGT00940000167819"/>
<dbReference type="HOGENOM" id="CLU_024513_1_2_1"/>
<dbReference type="InParanoid" id="Q06102"/>
<dbReference type="OMA" id="SLVCKHY"/>
<dbReference type="OrthoDB" id="1914176at2759"/>
<dbReference type="BioCyc" id="YEAST:G3O-34247-MONOMER"/>
<dbReference type="Reactome" id="R-SCE-77595">
    <property type="pathway name" value="Processing of Intronless Pre-mRNAs"/>
</dbReference>
<dbReference type="BioGRID-ORCS" id="856222">
    <property type="hits" value="0 hits in 10 CRISPR screens"/>
</dbReference>
<dbReference type="PRO" id="PR:Q06102"/>
<dbReference type="Proteomes" id="UP000002311">
    <property type="component" value="Chromosome XVI"/>
</dbReference>
<dbReference type="RNAct" id="Q06102">
    <property type="molecule type" value="protein"/>
</dbReference>
<dbReference type="GO" id="GO:0005829">
    <property type="term" value="C:cytosol"/>
    <property type="evidence" value="ECO:0000314"/>
    <property type="project" value="SGD"/>
</dbReference>
<dbReference type="GO" id="GO:0005847">
    <property type="term" value="C:mRNA cleavage and polyadenylation specificity factor complex"/>
    <property type="evidence" value="ECO:0000314"/>
    <property type="project" value="SGD"/>
</dbReference>
<dbReference type="GO" id="GO:0005634">
    <property type="term" value="C:nucleus"/>
    <property type="evidence" value="ECO:0000314"/>
    <property type="project" value="SGD"/>
</dbReference>
<dbReference type="GO" id="GO:0003723">
    <property type="term" value="F:RNA binding"/>
    <property type="evidence" value="ECO:0000314"/>
    <property type="project" value="SGD"/>
</dbReference>
<dbReference type="GO" id="GO:0008270">
    <property type="term" value="F:zinc ion binding"/>
    <property type="evidence" value="ECO:0007669"/>
    <property type="project" value="UniProtKB-KW"/>
</dbReference>
<dbReference type="GO" id="GO:0006397">
    <property type="term" value="P:mRNA processing"/>
    <property type="evidence" value="ECO:0000314"/>
    <property type="project" value="SGD"/>
</dbReference>
<dbReference type="GO" id="GO:0030846">
    <property type="term" value="P:termination of RNA polymerase II transcription, poly(A)-coupled"/>
    <property type="evidence" value="ECO:0000303"/>
    <property type="project" value="ComplexPortal"/>
</dbReference>
<dbReference type="FunFam" id="4.10.1000.10:FF:000012">
    <property type="entry name" value="cleavage and polyadenylation specificity factor subunit 4"/>
    <property type="match status" value="1"/>
</dbReference>
<dbReference type="Gene3D" id="4.10.1000.10">
    <property type="entry name" value="Zinc finger, CCCH-type"/>
    <property type="match status" value="2"/>
</dbReference>
<dbReference type="InterPro" id="IPR045348">
    <property type="entry name" value="CPSF4/Yth1"/>
</dbReference>
<dbReference type="InterPro" id="IPR000571">
    <property type="entry name" value="Znf_CCCH"/>
</dbReference>
<dbReference type="InterPro" id="IPR036855">
    <property type="entry name" value="Znf_CCCH_sf"/>
</dbReference>
<dbReference type="PANTHER" id="PTHR23102:SF24">
    <property type="entry name" value="CLEAVAGE AND POLYADENYLATION SPECIFICITY FACTOR SUBUNIT 4"/>
    <property type="match status" value="1"/>
</dbReference>
<dbReference type="PANTHER" id="PTHR23102">
    <property type="entry name" value="CLEAVAGE AND POLYADENYLATION SPECIFICITY FACTOR SUBUNIT 4-RELATED"/>
    <property type="match status" value="1"/>
</dbReference>
<dbReference type="Pfam" id="PF00642">
    <property type="entry name" value="zf-CCCH"/>
    <property type="match status" value="2"/>
</dbReference>
<dbReference type="Pfam" id="PF14608">
    <property type="entry name" value="zf-CCCH_2"/>
    <property type="match status" value="1"/>
</dbReference>
<dbReference type="SMART" id="SM00356">
    <property type="entry name" value="ZnF_C3H1"/>
    <property type="match status" value="5"/>
</dbReference>
<dbReference type="SUPFAM" id="SSF90229">
    <property type="entry name" value="CCCH zinc finger"/>
    <property type="match status" value="2"/>
</dbReference>
<dbReference type="PROSITE" id="PS50103">
    <property type="entry name" value="ZF_C3H1"/>
    <property type="match status" value="5"/>
</dbReference>
<reference key="1">
    <citation type="journal article" date="1997" name="Nature">
        <title>The nucleotide sequence of Saccharomyces cerevisiae chromosome XVI.</title>
        <authorList>
            <person name="Bussey H."/>
            <person name="Storms R.K."/>
            <person name="Ahmed A."/>
            <person name="Albermann K."/>
            <person name="Allen E."/>
            <person name="Ansorge W."/>
            <person name="Araujo R."/>
            <person name="Aparicio A."/>
            <person name="Barrell B.G."/>
            <person name="Badcock K."/>
            <person name="Benes V."/>
            <person name="Botstein D."/>
            <person name="Bowman S."/>
            <person name="Brueckner M."/>
            <person name="Carpenter J."/>
            <person name="Cherry J.M."/>
            <person name="Chung E."/>
            <person name="Churcher C.M."/>
            <person name="Coster F."/>
            <person name="Davis K."/>
            <person name="Davis R.W."/>
            <person name="Dietrich F.S."/>
            <person name="Delius H."/>
            <person name="DiPaolo T."/>
            <person name="Dubois E."/>
            <person name="Duesterhoeft A."/>
            <person name="Duncan M."/>
            <person name="Floeth M."/>
            <person name="Fortin N."/>
            <person name="Friesen J.D."/>
            <person name="Fritz C."/>
            <person name="Goffeau A."/>
            <person name="Hall J."/>
            <person name="Hebling U."/>
            <person name="Heumann K."/>
            <person name="Hilbert H."/>
            <person name="Hillier L.W."/>
            <person name="Hunicke-Smith S."/>
            <person name="Hyman R.W."/>
            <person name="Johnston M."/>
            <person name="Kalman S."/>
            <person name="Kleine K."/>
            <person name="Komp C."/>
            <person name="Kurdi O."/>
            <person name="Lashkari D."/>
            <person name="Lew H."/>
            <person name="Lin A."/>
            <person name="Lin D."/>
            <person name="Louis E.J."/>
            <person name="Marathe R."/>
            <person name="Messenguy F."/>
            <person name="Mewes H.-W."/>
            <person name="Mirtipati S."/>
            <person name="Moestl D."/>
            <person name="Mueller-Auer S."/>
            <person name="Namath A."/>
            <person name="Nentwich U."/>
            <person name="Oefner P."/>
            <person name="Pearson D."/>
            <person name="Petel F.X."/>
            <person name="Pohl T.M."/>
            <person name="Purnelle B."/>
            <person name="Rajandream M.A."/>
            <person name="Rechmann S."/>
            <person name="Rieger M."/>
            <person name="Riles L."/>
            <person name="Roberts D."/>
            <person name="Schaefer M."/>
            <person name="Scharfe M."/>
            <person name="Scherens B."/>
            <person name="Schramm S."/>
            <person name="Schroeder M."/>
            <person name="Sdicu A.-M."/>
            <person name="Tettelin H."/>
            <person name="Urrestarazu L.A."/>
            <person name="Ushinsky S."/>
            <person name="Vierendeels F."/>
            <person name="Vissers S."/>
            <person name="Voss H."/>
            <person name="Walsh S.V."/>
            <person name="Wambutt R."/>
            <person name="Wang Y."/>
            <person name="Wedler E."/>
            <person name="Wedler H."/>
            <person name="Winnett E."/>
            <person name="Zhong W.-W."/>
            <person name="Zollner A."/>
            <person name="Vo D.H."/>
            <person name="Hani J."/>
        </authorList>
    </citation>
    <scope>NUCLEOTIDE SEQUENCE [LARGE SCALE GENOMIC DNA]</scope>
    <source>
        <strain>ATCC 204508 / S288c</strain>
    </source>
</reference>
<reference key="2">
    <citation type="journal article" date="2014" name="G3 (Bethesda)">
        <title>The reference genome sequence of Saccharomyces cerevisiae: Then and now.</title>
        <authorList>
            <person name="Engel S.R."/>
            <person name="Dietrich F.S."/>
            <person name="Fisk D.G."/>
            <person name="Binkley G."/>
            <person name="Balakrishnan R."/>
            <person name="Costanzo M.C."/>
            <person name="Dwight S.S."/>
            <person name="Hitz B.C."/>
            <person name="Karra K."/>
            <person name="Nash R.S."/>
            <person name="Weng S."/>
            <person name="Wong E.D."/>
            <person name="Lloyd P."/>
            <person name="Skrzypek M.S."/>
            <person name="Miyasato S.R."/>
            <person name="Simison M."/>
            <person name="Cherry J.M."/>
        </authorList>
    </citation>
    <scope>GENOME REANNOTATION</scope>
    <source>
        <strain>ATCC 204508 / S288c</strain>
    </source>
</reference>
<reference key="3">
    <citation type="journal article" date="2007" name="Genome Res.">
        <title>Approaching a complete repository of sequence-verified protein-encoding clones for Saccharomyces cerevisiae.</title>
        <authorList>
            <person name="Hu Y."/>
            <person name="Rolfs A."/>
            <person name="Bhullar B."/>
            <person name="Murthy T.V.S."/>
            <person name="Zhu C."/>
            <person name="Berger M.F."/>
            <person name="Camargo A.A."/>
            <person name="Kelley F."/>
            <person name="McCarron S."/>
            <person name="Jepson D."/>
            <person name="Richardson A."/>
            <person name="Raphael J."/>
            <person name="Moreira D."/>
            <person name="Taycher E."/>
            <person name="Zuo D."/>
            <person name="Mohr S."/>
            <person name="Kane M.F."/>
            <person name="Williamson J."/>
            <person name="Simpson A.J.G."/>
            <person name="Bulyk M.L."/>
            <person name="Harlow E."/>
            <person name="Marsischky G."/>
            <person name="Kolodner R.D."/>
            <person name="LaBaer J."/>
        </authorList>
    </citation>
    <scope>NUCLEOTIDE SEQUENCE [GENOMIC DNA]</scope>
    <source>
        <strain>ATCC 204508 / S288c</strain>
    </source>
</reference>
<reference key="4">
    <citation type="journal article" date="1997" name="Genes Dev.">
        <title>The 30-kD subunit of mammalian cleavage and polyadenylation specificity factor and its yeast homolog are RNA-binding zinc finger proteins.</title>
        <authorList>
            <person name="Barabino S.M.L."/>
            <person name="Huebner W."/>
            <person name="Jenny A."/>
            <person name="Minvielle-Sebastia L."/>
            <person name="Keller W."/>
        </authorList>
    </citation>
    <scope>IDENTIFICATION IN THE CPF COMPLEX</scope>
    <scope>INTERACTION WITH FIP1</scope>
</reference>
<reference key="5">
    <citation type="journal article" date="2000" name="EMBO J.">
        <title>Distinct roles of two Yth1p domains in 3'-end cleavage and polyadenylation of yeast pre-mRNAs.</title>
        <authorList>
            <person name="Barabino S.M."/>
            <person name="Ohnacker M."/>
            <person name="Keller W."/>
        </authorList>
    </citation>
    <scope>RNA-BINDING</scope>
    <scope>MUTAGENESIS OF CYS-67; TRP-70; CYS-75; ASP-79; CYS-81 AND HIS-142</scope>
</reference>
<reference key="6">
    <citation type="journal article" date="2001" name="Mol. Cell. Biol.">
        <title>Fip1 regulates the activity of Poly(A) polymerase through multiple interactions.</title>
        <authorList>
            <person name="Helmling S."/>
            <person name="Zhelkovsky A."/>
            <person name="Moore C.L."/>
        </authorList>
    </citation>
    <scope>INTERACTION WITH FIP1</scope>
</reference>
<reference key="7">
    <citation type="journal article" date="2003" name="J. Biol. Chem.">
        <title>Organization and function of APT, a subcomplex of the yeast cleavage and polyadenylation factor involved in the formation of mRNA and small nucleolar RNA 3'-ends.</title>
        <authorList>
            <person name="Nedea E."/>
            <person name="He X."/>
            <person name="Kim M."/>
            <person name="Pootoolal J."/>
            <person name="Zhong G."/>
            <person name="Canadien V."/>
            <person name="Hughes T."/>
            <person name="Buratowski S."/>
            <person name="Moore C.L."/>
            <person name="Greenblatt J."/>
        </authorList>
    </citation>
    <scope>IDENTIFICATION IN THE CPF COMPLEX</scope>
    <scope>SUBCELLULAR LOCATION</scope>
    <scope>IDENTIFICATION BY MASS SPECTROMETRY</scope>
</reference>
<reference key="8">
    <citation type="journal article" date="2003" name="Nature">
        <title>Global analysis of protein localization in budding yeast.</title>
        <authorList>
            <person name="Huh W.-K."/>
            <person name="Falvo J.V."/>
            <person name="Gerke L.C."/>
            <person name="Carroll A.S."/>
            <person name="Howson R.W."/>
            <person name="Weissman J.S."/>
            <person name="O'Shea E.K."/>
        </authorList>
    </citation>
    <scope>SUBCELLULAR LOCATION [LARGE SCALE ANALYSIS]</scope>
</reference>
<reference key="9">
    <citation type="journal article" date="2003" name="Nature">
        <title>Global analysis of protein expression in yeast.</title>
        <authorList>
            <person name="Ghaemmaghami S."/>
            <person name="Huh W.-K."/>
            <person name="Bower K."/>
            <person name="Howson R.W."/>
            <person name="Belle A."/>
            <person name="Dephoure N."/>
            <person name="O'Shea E.K."/>
            <person name="Weissman J.S."/>
        </authorList>
    </citation>
    <scope>LEVEL OF PROTEIN EXPRESSION [LARGE SCALE ANALYSIS]</scope>
</reference>
<reference key="10">
    <citation type="journal article" date="2003" name="Nucleic Acids Res.">
        <title>Functional dissection of the zinc finger and flanking domains of the Yth1 cleavage/polyadenylation factor.</title>
        <authorList>
            <person name="Tacahashi Y."/>
            <person name="Helmling S."/>
            <person name="Moore C.L."/>
        </authorList>
    </citation>
    <scope>FUNCTION</scope>
    <scope>INTERACTION WITH FIP1 AND YSH1</scope>
</reference>